<evidence type="ECO:0000250" key="1">
    <source>
        <dbReference type="UniProtKB" id="D0VWQ1"/>
    </source>
</evidence>
<evidence type="ECO:0000250" key="2">
    <source>
        <dbReference type="UniProtKB" id="P09118"/>
    </source>
</evidence>
<evidence type="ECO:0000250" key="3">
    <source>
        <dbReference type="UniProtKB" id="Q00511"/>
    </source>
</evidence>
<evidence type="ECO:0000255" key="4"/>
<evidence type="ECO:0000255" key="5">
    <source>
        <dbReference type="PIRNR" id="PIRNR000241"/>
    </source>
</evidence>
<evidence type="ECO:0000255" key="6">
    <source>
        <dbReference type="RuleBase" id="RU004455"/>
    </source>
</evidence>
<evidence type="ECO:0000269" key="7">
    <source>
    </source>
</evidence>
<evidence type="ECO:0000303" key="8">
    <source>
    </source>
</evidence>
<evidence type="ECO:0000305" key="9"/>
<evidence type="ECO:0000312" key="10">
    <source>
        <dbReference type="EMBL" id="AAH76466.1"/>
    </source>
</evidence>
<evidence type="ECO:0000312" key="11">
    <source>
        <dbReference type="Proteomes" id="UP000000437"/>
    </source>
</evidence>
<evidence type="ECO:0000312" key="12">
    <source>
        <dbReference type="ZFIN" id="ZDB-GENE-030826-24"/>
    </source>
</evidence>
<evidence type="ECO:0007744" key="13">
    <source>
        <dbReference type="PDB" id="5M98"/>
    </source>
</evidence>
<evidence type="ECO:0007829" key="14">
    <source>
        <dbReference type="PDB" id="5LL1"/>
    </source>
</evidence>
<accession>Q6DG85</accession>
<sequence length="298" mass="34187">MATTSNQNVEFVRTGYGKNMVKVLHIRREGNHHHIIELIANVQLTLKTRKDYLTGDNSDIIPTDTVKNTVHALAKLKGIKSIESFALDICEHFLTAFNHVTRVKVNIDEVPWKRLEKNGVEHNHAFIHCPEALRFCEAEQYLSKTPVVHSGLKDMKVLKTTQTGFEGFLRDRFTTLTDAKDRFFCTSVYARWRYNTINVAFDAAWKAVKDTVIQKFAGPYDRGEYSPSVQKTLYDTQLLVLDRIPEVEEIEIIMPNQHYFVIDMTKIGLSNKDEVYLPLDNPSGNITGTVCRKPRARM</sequence>
<proteinExistence type="evidence at protein level"/>
<comment type="function">
    <text evidence="5 6 7">Catalyzes the oxidation of uric acid to 5-hydroxyisourate, which is further processed to form (S)-allantoin.</text>
</comment>
<comment type="catalytic activity">
    <reaction evidence="5 6 7">
        <text>urate + O2 + H2O = 5-hydroxyisourate + H2O2</text>
        <dbReference type="Rhea" id="RHEA:21368"/>
        <dbReference type="ChEBI" id="CHEBI:15377"/>
        <dbReference type="ChEBI" id="CHEBI:15379"/>
        <dbReference type="ChEBI" id="CHEBI:16240"/>
        <dbReference type="ChEBI" id="CHEBI:17775"/>
        <dbReference type="ChEBI" id="CHEBI:18072"/>
        <dbReference type="EC" id="1.7.3.3"/>
    </reaction>
</comment>
<comment type="activity regulation">
    <text evidence="7">Competitively inhibited by xanthine.</text>
</comment>
<comment type="biophysicochemical properties">
    <kinetics>
        <KM evidence="7">11 uM for urate</KM>
    </kinetics>
</comment>
<comment type="pathway">
    <text evidence="5 7">Purine metabolism; urate degradation; (S)-allantoin from urate: step 1/3.</text>
</comment>
<comment type="subunit">
    <text evidence="7">Homotetramer; dimer of dimers.</text>
</comment>
<comment type="subcellular location">
    <subcellularLocation>
        <location evidence="2 5">Peroxisome</location>
    </subcellularLocation>
</comment>
<comment type="similarity">
    <text evidence="5 6 9">Belongs to the uricase family.</text>
</comment>
<organism evidence="10">
    <name type="scientific">Danio rerio</name>
    <name type="common">Zebrafish</name>
    <name type="synonym">Brachydanio rerio</name>
    <dbReference type="NCBI Taxonomy" id="7955"/>
    <lineage>
        <taxon>Eukaryota</taxon>
        <taxon>Metazoa</taxon>
        <taxon>Chordata</taxon>
        <taxon>Craniata</taxon>
        <taxon>Vertebrata</taxon>
        <taxon>Euteleostomi</taxon>
        <taxon>Actinopterygii</taxon>
        <taxon>Neopterygii</taxon>
        <taxon>Teleostei</taxon>
        <taxon>Ostariophysi</taxon>
        <taxon>Cypriniformes</taxon>
        <taxon>Danionidae</taxon>
        <taxon>Danioninae</taxon>
        <taxon>Danio</taxon>
    </lineage>
</organism>
<keyword id="KW-0002">3D-structure</keyword>
<keyword id="KW-0560">Oxidoreductase</keyword>
<keyword id="KW-0576">Peroxisome</keyword>
<keyword id="KW-0659">Purine metabolism</keyword>
<keyword id="KW-1185">Reference proteome</keyword>
<name>URIC_DANRE</name>
<feature type="chain" id="PRO_0000440161" description="Uricase">
    <location>
        <begin position="1"/>
        <end position="298"/>
    </location>
</feature>
<feature type="short sequence motif" description="Microbody targeting signal" evidence="4">
    <location>
        <begin position="296"/>
        <end position="298"/>
    </location>
</feature>
<feature type="active site" description="Charge relay system" evidence="1">
    <location>
        <position position="18"/>
    </location>
</feature>
<feature type="active site" description="Charge relay system" evidence="1">
    <location>
        <position position="63"/>
    </location>
</feature>
<feature type="active site" description="Charge relay system" evidence="1">
    <location>
        <position position="258"/>
    </location>
</feature>
<feature type="binding site" evidence="3">
    <location>
        <position position="63"/>
    </location>
    <ligand>
        <name>urate</name>
        <dbReference type="ChEBI" id="CHEBI:17775"/>
    </ligand>
</feature>
<feature type="binding site" evidence="3">
    <location>
        <position position="64"/>
    </location>
    <ligand>
        <name>urate</name>
        <dbReference type="ChEBI" id="CHEBI:17775"/>
    </ligand>
</feature>
<feature type="binding site" evidence="3">
    <location>
        <position position="165"/>
    </location>
    <ligand>
        <name>urate</name>
        <dbReference type="ChEBI" id="CHEBI:17775"/>
    </ligand>
</feature>
<feature type="binding site" evidence="3">
    <location>
        <position position="182"/>
    </location>
    <ligand>
        <name>urate</name>
        <dbReference type="ChEBI" id="CHEBI:17775"/>
    </ligand>
</feature>
<feature type="binding site" evidence="3">
    <location>
        <position position="229"/>
    </location>
    <ligand>
        <name>urate</name>
        <dbReference type="ChEBI" id="CHEBI:17775"/>
    </ligand>
</feature>
<feature type="binding site" evidence="3">
    <location>
        <position position="230"/>
    </location>
    <ligand>
        <name>urate</name>
        <dbReference type="ChEBI" id="CHEBI:17775"/>
    </ligand>
</feature>
<feature type="binding site" evidence="3">
    <location>
        <position position="256"/>
    </location>
    <ligand>
        <name>urate</name>
        <dbReference type="ChEBI" id="CHEBI:17775"/>
    </ligand>
</feature>
<feature type="mutagenesis site" description="Impairs catalytic activity. Has reduced affinity for substrate." evidence="7">
    <original>F</original>
    <variation>S</variation>
    <location>
        <position position="216"/>
    </location>
</feature>
<feature type="strand" evidence="14">
    <location>
        <begin position="9"/>
        <end position="28"/>
    </location>
</feature>
<feature type="strand" evidence="14">
    <location>
        <begin position="33"/>
        <end position="47"/>
    </location>
</feature>
<feature type="helix" evidence="14">
    <location>
        <begin position="50"/>
        <end position="54"/>
    </location>
</feature>
<feature type="helix" evidence="14">
    <location>
        <begin position="63"/>
        <end position="77"/>
    </location>
</feature>
<feature type="helix" evidence="14">
    <location>
        <begin position="82"/>
        <end position="95"/>
    </location>
</feature>
<feature type="strand" evidence="14">
    <location>
        <begin position="98"/>
        <end position="109"/>
    </location>
</feature>
<feature type="strand" evidence="14">
    <location>
        <begin position="112"/>
        <end position="117"/>
    </location>
</feature>
<feature type="strand" evidence="14">
    <location>
        <begin position="120"/>
        <end position="128"/>
    </location>
</feature>
<feature type="strand" evidence="14">
    <location>
        <begin position="131"/>
        <end position="141"/>
    </location>
</feature>
<feature type="strand" evidence="14">
    <location>
        <begin position="147"/>
        <end position="163"/>
    </location>
</feature>
<feature type="strand" evidence="14">
    <location>
        <begin position="179"/>
        <end position="181"/>
    </location>
</feature>
<feature type="strand" evidence="14">
    <location>
        <begin position="184"/>
        <end position="195"/>
    </location>
</feature>
<feature type="helix" evidence="14">
    <location>
        <begin position="201"/>
        <end position="217"/>
    </location>
</feature>
<feature type="turn" evidence="14">
    <location>
        <begin position="220"/>
        <end position="222"/>
    </location>
</feature>
<feature type="helix" evidence="14">
    <location>
        <begin position="229"/>
        <end position="243"/>
    </location>
</feature>
<feature type="strand" evidence="14">
    <location>
        <begin position="247"/>
        <end position="257"/>
    </location>
</feature>
<feature type="strand" evidence="14">
    <location>
        <begin position="259"/>
        <end position="261"/>
    </location>
</feature>
<feature type="helix" evidence="14">
    <location>
        <begin position="265"/>
        <end position="267"/>
    </location>
</feature>
<feature type="strand" evidence="14">
    <location>
        <begin position="272"/>
        <end position="278"/>
    </location>
</feature>
<feature type="strand" evidence="14">
    <location>
        <begin position="281"/>
        <end position="292"/>
    </location>
</feature>
<reference evidence="11" key="1">
    <citation type="journal article" date="2013" name="Nature">
        <title>The zebrafish reference genome sequence and its relationship to the human genome.</title>
        <authorList>
            <person name="Howe K."/>
            <person name="Clark M.D."/>
            <person name="Torroja C.F."/>
            <person name="Torrance J."/>
            <person name="Berthelot C."/>
            <person name="Muffato M."/>
            <person name="Collins J.E."/>
            <person name="Humphray S."/>
            <person name="McLaren K."/>
            <person name="Matthews L."/>
            <person name="McLaren S."/>
            <person name="Sealy I."/>
            <person name="Caccamo M."/>
            <person name="Churcher C."/>
            <person name="Scott C."/>
            <person name="Barrett J.C."/>
            <person name="Koch R."/>
            <person name="Rauch G.J."/>
            <person name="White S."/>
            <person name="Chow W."/>
            <person name="Kilian B."/>
            <person name="Quintais L.T."/>
            <person name="Guerra-Assuncao J.A."/>
            <person name="Zhou Y."/>
            <person name="Gu Y."/>
            <person name="Yen J."/>
            <person name="Vogel J.H."/>
            <person name="Eyre T."/>
            <person name="Redmond S."/>
            <person name="Banerjee R."/>
            <person name="Chi J."/>
            <person name="Fu B."/>
            <person name="Langley E."/>
            <person name="Maguire S.F."/>
            <person name="Laird G.K."/>
            <person name="Lloyd D."/>
            <person name="Kenyon E."/>
            <person name="Donaldson S."/>
            <person name="Sehra H."/>
            <person name="Almeida-King J."/>
            <person name="Loveland J."/>
            <person name="Trevanion S."/>
            <person name="Jones M."/>
            <person name="Quail M."/>
            <person name="Willey D."/>
            <person name="Hunt A."/>
            <person name="Burton J."/>
            <person name="Sims S."/>
            <person name="McLay K."/>
            <person name="Plumb B."/>
            <person name="Davis J."/>
            <person name="Clee C."/>
            <person name="Oliver K."/>
            <person name="Clark R."/>
            <person name="Riddle C."/>
            <person name="Elliot D."/>
            <person name="Threadgold G."/>
            <person name="Harden G."/>
            <person name="Ware D."/>
            <person name="Begum S."/>
            <person name="Mortimore B."/>
            <person name="Kerry G."/>
            <person name="Heath P."/>
            <person name="Phillimore B."/>
            <person name="Tracey A."/>
            <person name="Corby N."/>
            <person name="Dunn M."/>
            <person name="Johnson C."/>
            <person name="Wood J."/>
            <person name="Clark S."/>
            <person name="Pelan S."/>
            <person name="Griffiths G."/>
            <person name="Smith M."/>
            <person name="Glithero R."/>
            <person name="Howden P."/>
            <person name="Barker N."/>
            <person name="Lloyd C."/>
            <person name="Stevens C."/>
            <person name="Harley J."/>
            <person name="Holt K."/>
            <person name="Panagiotidis G."/>
            <person name="Lovell J."/>
            <person name="Beasley H."/>
            <person name="Henderson C."/>
            <person name="Gordon D."/>
            <person name="Auger K."/>
            <person name="Wright D."/>
            <person name="Collins J."/>
            <person name="Raisen C."/>
            <person name="Dyer L."/>
            <person name="Leung K."/>
            <person name="Robertson L."/>
            <person name="Ambridge K."/>
            <person name="Leongamornlert D."/>
            <person name="McGuire S."/>
            <person name="Gilderthorp R."/>
            <person name="Griffiths C."/>
            <person name="Manthravadi D."/>
            <person name="Nichol S."/>
            <person name="Barker G."/>
            <person name="Whitehead S."/>
            <person name="Kay M."/>
            <person name="Brown J."/>
            <person name="Murnane C."/>
            <person name="Gray E."/>
            <person name="Humphries M."/>
            <person name="Sycamore N."/>
            <person name="Barker D."/>
            <person name="Saunders D."/>
            <person name="Wallis J."/>
            <person name="Babbage A."/>
            <person name="Hammond S."/>
            <person name="Mashreghi-Mohammadi M."/>
            <person name="Barr L."/>
            <person name="Martin S."/>
            <person name="Wray P."/>
            <person name="Ellington A."/>
            <person name="Matthews N."/>
            <person name="Ellwood M."/>
            <person name="Woodmansey R."/>
            <person name="Clark G."/>
            <person name="Cooper J."/>
            <person name="Tromans A."/>
            <person name="Grafham D."/>
            <person name="Skuce C."/>
            <person name="Pandian R."/>
            <person name="Andrews R."/>
            <person name="Harrison E."/>
            <person name="Kimberley A."/>
            <person name="Garnett J."/>
            <person name="Fosker N."/>
            <person name="Hall R."/>
            <person name="Garner P."/>
            <person name="Kelly D."/>
            <person name="Bird C."/>
            <person name="Palmer S."/>
            <person name="Gehring I."/>
            <person name="Berger A."/>
            <person name="Dooley C.M."/>
            <person name="Ersan-Urun Z."/>
            <person name="Eser C."/>
            <person name="Geiger H."/>
            <person name="Geisler M."/>
            <person name="Karotki L."/>
            <person name="Kirn A."/>
            <person name="Konantz J."/>
            <person name="Konantz M."/>
            <person name="Oberlander M."/>
            <person name="Rudolph-Geiger S."/>
            <person name="Teucke M."/>
            <person name="Lanz C."/>
            <person name="Raddatz G."/>
            <person name="Osoegawa K."/>
            <person name="Zhu B."/>
            <person name="Rapp A."/>
            <person name="Widaa S."/>
            <person name="Langford C."/>
            <person name="Yang F."/>
            <person name="Schuster S.C."/>
            <person name="Carter N.P."/>
            <person name="Harrow J."/>
            <person name="Ning Z."/>
            <person name="Herrero J."/>
            <person name="Searle S.M."/>
            <person name="Enright A."/>
            <person name="Geisler R."/>
            <person name="Plasterk R.H."/>
            <person name="Lee C."/>
            <person name="Westerfield M."/>
            <person name="de Jong P.J."/>
            <person name="Zon L.I."/>
            <person name="Postlethwait J.H."/>
            <person name="Nusslein-Volhard C."/>
            <person name="Hubbard T.J."/>
            <person name="Roest Crollius H."/>
            <person name="Rogers J."/>
            <person name="Stemple D.L."/>
        </authorList>
    </citation>
    <scope>NUCLEOTIDE SEQUENCE [LARGE SCALE GENOMIC DNA]</scope>
    <source>
        <strain>Tuebingen</strain>
    </source>
</reference>
<reference evidence="10" key="2">
    <citation type="submission" date="2008-04" db="EMBL/GenBank/DDBJ databases">
        <authorList>
            <consortium name="NIH - Zebrafish Gene Collection (ZGC) project"/>
        </authorList>
    </citation>
    <scope>NUCLEOTIDE SEQUENCE [LARGE SCALE MRNA]</scope>
</reference>
<reference evidence="13" key="3">
    <citation type="journal article" date="2016" name="Sci. Rep.">
        <title>Catalysis and structure of zebrafish urate oxidase provide insights into the origin of hyperuricemia in hominoids.</title>
        <authorList>
            <person name="Marchetti M."/>
            <person name="Liuzzi A."/>
            <person name="Fermi B."/>
            <person name="Corsini R."/>
            <person name="Folli C."/>
            <person name="Speranzini V."/>
            <person name="Gandolfi F."/>
            <person name="Bettati S."/>
            <person name="Ronda L."/>
            <person name="Cendron L."/>
            <person name="Berni R."/>
            <person name="Zanotti G."/>
            <person name="Percudani R."/>
        </authorList>
    </citation>
    <scope>X-RAY CRYSTALLOGRAPHY (2.80 ANGSTROMS)</scope>
    <scope>FUNCTION</scope>
    <scope>CATALYTIC ACTIVITY</scope>
    <scope>ACTIVITY REGULATION</scope>
    <scope>BIOPHYSICOCHEMICAL PROPERTIES</scope>
    <scope>PATHWAY</scope>
    <scope>SUBUNIT</scope>
    <scope>MUTAGENESIS OF PHE-216</scope>
</reference>
<gene>
    <name evidence="12" type="primary">uox</name>
</gene>
<dbReference type="EC" id="1.7.3.3" evidence="5 6 7"/>
<dbReference type="EMBL" id="CR931978">
    <property type="status" value="NOT_ANNOTATED_CDS"/>
    <property type="molecule type" value="Genomic_DNA"/>
</dbReference>
<dbReference type="EMBL" id="BC076466">
    <property type="protein sequence ID" value="AAH76466.1"/>
    <property type="molecule type" value="mRNA"/>
</dbReference>
<dbReference type="EMBL" id="BC164061">
    <property type="protein sequence ID" value="AAI64061.1"/>
    <property type="molecule type" value="mRNA"/>
</dbReference>
<dbReference type="RefSeq" id="NP_001002332.1">
    <property type="nucleotide sequence ID" value="NM_001002332.1"/>
</dbReference>
<dbReference type="PDB" id="5LL1">
    <property type="method" value="X-ray"/>
    <property type="resolution" value="2.80 A"/>
    <property type="chains" value="A/B/C/D/E/F/G/H=1-298"/>
</dbReference>
<dbReference type="PDB" id="5M98">
    <property type="method" value="X-ray"/>
    <property type="resolution" value="2.80 A"/>
    <property type="chains" value="A/B/C/D/E/F/G/H=1-298"/>
</dbReference>
<dbReference type="PDBsum" id="5LL1"/>
<dbReference type="PDBsum" id="5M98"/>
<dbReference type="SMR" id="Q6DG85"/>
<dbReference type="FunCoup" id="Q6DG85">
    <property type="interactions" value="404"/>
</dbReference>
<dbReference type="STRING" id="7955.ENSDARP00000121053"/>
<dbReference type="PaxDb" id="7955-ENSDARP00000026870"/>
<dbReference type="Ensembl" id="ENSDART00000146940">
    <property type="protein sequence ID" value="ENSDARP00000121053"/>
    <property type="gene ID" value="ENSDARG00000007024"/>
</dbReference>
<dbReference type="GeneID" id="436604"/>
<dbReference type="KEGG" id="dre:436604"/>
<dbReference type="AGR" id="ZFIN:ZDB-GENE-030826-24"/>
<dbReference type="CTD" id="391051"/>
<dbReference type="ZFIN" id="ZDB-GENE-030826-24">
    <property type="gene designation" value="uox"/>
</dbReference>
<dbReference type="eggNOG" id="KOG1599">
    <property type="taxonomic scope" value="Eukaryota"/>
</dbReference>
<dbReference type="InParanoid" id="Q6DG85"/>
<dbReference type="OrthoDB" id="9992118at2759"/>
<dbReference type="PhylomeDB" id="Q6DG85"/>
<dbReference type="TreeFam" id="TF323438"/>
<dbReference type="UniPathway" id="UPA00394">
    <property type="reaction ID" value="UER00650"/>
</dbReference>
<dbReference type="PRO" id="PR:Q6DG85"/>
<dbReference type="Proteomes" id="UP000000437">
    <property type="component" value="Chromosome 11"/>
</dbReference>
<dbReference type="Bgee" id="ENSDARG00000007024">
    <property type="expression patterns" value="Expressed in liver and 20 other cell types or tissues"/>
</dbReference>
<dbReference type="ExpressionAtlas" id="Q6DG85">
    <property type="expression patterns" value="baseline and differential"/>
</dbReference>
<dbReference type="GO" id="GO:0005777">
    <property type="term" value="C:peroxisome"/>
    <property type="evidence" value="ECO:0000318"/>
    <property type="project" value="GO_Central"/>
</dbReference>
<dbReference type="GO" id="GO:0004846">
    <property type="term" value="F:urate oxidase activity"/>
    <property type="evidence" value="ECO:0000314"/>
    <property type="project" value="UniProtKB"/>
</dbReference>
<dbReference type="GO" id="GO:0051289">
    <property type="term" value="P:protein homotetramerization"/>
    <property type="evidence" value="ECO:0000353"/>
    <property type="project" value="ZFIN"/>
</dbReference>
<dbReference type="GO" id="GO:0006145">
    <property type="term" value="P:purine nucleobase catabolic process"/>
    <property type="evidence" value="ECO:0000318"/>
    <property type="project" value="GO_Central"/>
</dbReference>
<dbReference type="GO" id="GO:0019628">
    <property type="term" value="P:urate catabolic process"/>
    <property type="evidence" value="ECO:0000314"/>
    <property type="project" value="UniProtKB"/>
</dbReference>
<dbReference type="GO" id="GO:0046415">
    <property type="term" value="P:urate metabolic process"/>
    <property type="evidence" value="ECO:0000315"/>
    <property type="project" value="ZFIN"/>
</dbReference>
<dbReference type="FunFam" id="3.10.270.10:FF:000001">
    <property type="entry name" value="Uricase"/>
    <property type="match status" value="1"/>
</dbReference>
<dbReference type="Gene3D" id="3.10.270.10">
    <property type="entry name" value="Urate Oxidase"/>
    <property type="match status" value="1"/>
</dbReference>
<dbReference type="InterPro" id="IPR002042">
    <property type="entry name" value="Uricase"/>
</dbReference>
<dbReference type="NCBIfam" id="TIGR03383">
    <property type="entry name" value="urate_oxi"/>
    <property type="match status" value="1"/>
</dbReference>
<dbReference type="PANTHER" id="PTHR42874">
    <property type="entry name" value="URICASE"/>
    <property type="match status" value="1"/>
</dbReference>
<dbReference type="PANTHER" id="PTHR42874:SF1">
    <property type="entry name" value="URICASE"/>
    <property type="match status" value="1"/>
</dbReference>
<dbReference type="Pfam" id="PF01014">
    <property type="entry name" value="Uricase"/>
    <property type="match status" value="2"/>
</dbReference>
<dbReference type="PIRSF" id="PIRSF000241">
    <property type="entry name" value="Urate_oxidase"/>
    <property type="match status" value="1"/>
</dbReference>
<dbReference type="PRINTS" id="PR00093">
    <property type="entry name" value="URICASE"/>
</dbReference>
<dbReference type="SUPFAM" id="SSF55620">
    <property type="entry name" value="Tetrahydrobiopterin biosynthesis enzymes-like"/>
    <property type="match status" value="2"/>
</dbReference>
<protein>
    <recommendedName>
        <fullName evidence="5 6 9">Uricase</fullName>
        <ecNumber evidence="5 6 7">1.7.3.3</ecNumber>
    </recommendedName>
    <alternativeName>
        <fullName evidence="5 8">Urate oxidase</fullName>
    </alternativeName>
</protein>